<sequence>MPKQLKEIKDFLLTARRKDAKSVRIKKNPDNVTKFKVRCSKYLYTIVVKEKEKAEKLKQSLPPGLQVKELK</sequence>
<comment type="similarity">
    <text evidence="1">Belongs to the eukaryotic ribosomal protein eL38 family.</text>
</comment>
<feature type="chain" id="PRO_0000319564" description="Large ribosomal subunit protein eL38">
    <location>
        <begin position="1"/>
        <end position="71"/>
    </location>
</feature>
<protein>
    <recommendedName>
        <fullName evidence="1">Large ribosomal subunit protein eL38</fullName>
    </recommendedName>
    <alternativeName>
        <fullName>60S ribosomal protein L38</fullName>
    </alternativeName>
</protein>
<evidence type="ECO:0000305" key="1"/>
<reference key="1">
    <citation type="journal article" date="2008" name="Insect Biochem. Mol. Biol.">
        <title>An insight into the sialome of the soft tick, Ornithodorus parkeri.</title>
        <authorList>
            <person name="Francischetti I.M.B."/>
            <person name="Mans B.J."/>
            <person name="Meng Z."/>
            <person name="Gudderra N."/>
            <person name="Veenstra T.D."/>
            <person name="Pham V.M."/>
            <person name="Ribeiro J.M.C."/>
        </authorList>
    </citation>
    <scope>NUCLEOTIDE SEQUENCE [LARGE SCALE MRNA]</scope>
    <source>
        <tissue>Salivary gland</tissue>
    </source>
</reference>
<keyword id="KW-0687">Ribonucleoprotein</keyword>
<keyword id="KW-0689">Ribosomal protein</keyword>
<name>RL38_ORNPR</name>
<dbReference type="EMBL" id="EF633849">
    <property type="protein sequence ID" value="ABR23366.1"/>
    <property type="molecule type" value="mRNA"/>
</dbReference>
<dbReference type="SMR" id="A6N9N3"/>
<dbReference type="GO" id="GO:0022625">
    <property type="term" value="C:cytosolic large ribosomal subunit"/>
    <property type="evidence" value="ECO:0007669"/>
    <property type="project" value="TreeGrafter"/>
</dbReference>
<dbReference type="GO" id="GO:0003735">
    <property type="term" value="F:structural constituent of ribosome"/>
    <property type="evidence" value="ECO:0007669"/>
    <property type="project" value="InterPro"/>
</dbReference>
<dbReference type="GO" id="GO:0022618">
    <property type="term" value="P:protein-RNA complex assembly"/>
    <property type="evidence" value="ECO:0007669"/>
    <property type="project" value="TreeGrafter"/>
</dbReference>
<dbReference type="GO" id="GO:0006412">
    <property type="term" value="P:translation"/>
    <property type="evidence" value="ECO:0007669"/>
    <property type="project" value="InterPro"/>
</dbReference>
<dbReference type="FunFam" id="3.30.720.90:FF:000001">
    <property type="entry name" value="60S ribosomal protein L38"/>
    <property type="match status" value="1"/>
</dbReference>
<dbReference type="Gene3D" id="3.30.720.90">
    <property type="match status" value="1"/>
</dbReference>
<dbReference type="InterPro" id="IPR002675">
    <property type="entry name" value="Ribosomal_eL38"/>
</dbReference>
<dbReference type="InterPro" id="IPR038464">
    <property type="entry name" value="Ribosomal_eL38_sf"/>
</dbReference>
<dbReference type="PANTHER" id="PTHR10965">
    <property type="entry name" value="60S RIBOSOMAL PROTEIN L38"/>
    <property type="match status" value="1"/>
</dbReference>
<dbReference type="PANTHER" id="PTHR10965:SF0">
    <property type="entry name" value="LARGE RIBOSOMAL SUBUNIT PROTEIN EL38"/>
    <property type="match status" value="1"/>
</dbReference>
<dbReference type="Pfam" id="PF01781">
    <property type="entry name" value="Ribosomal_L38e"/>
    <property type="match status" value="1"/>
</dbReference>
<proteinExistence type="inferred from homology"/>
<accession>A6N9N3</accession>
<gene>
    <name type="primary">RpL38</name>
</gene>
<organism>
    <name type="scientific">Ornithodoros parkeri</name>
    <name type="common">Soft tick</name>
    <name type="synonym">Argasid tick</name>
    <dbReference type="NCBI Taxonomy" id="140564"/>
    <lineage>
        <taxon>Eukaryota</taxon>
        <taxon>Metazoa</taxon>
        <taxon>Ecdysozoa</taxon>
        <taxon>Arthropoda</taxon>
        <taxon>Chelicerata</taxon>
        <taxon>Arachnida</taxon>
        <taxon>Acari</taxon>
        <taxon>Parasitiformes</taxon>
        <taxon>Ixodida</taxon>
        <taxon>Ixodoidea</taxon>
        <taxon>Argasidae</taxon>
        <taxon>Ornithodorinae</taxon>
        <taxon>Ornithodoros</taxon>
    </lineage>
</organism>